<keyword id="KW-1015">Disulfide bond</keyword>
<keyword id="KW-0325">Glycoprotein</keyword>
<keyword id="KW-0326">Glycosidase</keyword>
<keyword id="KW-0378">Hydrolase</keyword>
<keyword id="KW-0443">Lipid metabolism</keyword>
<keyword id="KW-0458">Lysosome</keyword>
<keyword id="KW-1185">Reference proteome</keyword>
<keyword id="KW-0732">Signal</keyword>
<keyword id="KW-0865">Zymogen</keyword>
<protein>
    <recommendedName>
        <fullName evidence="2">Beta-hexosaminidase subunit alpha</fullName>
        <ecNumber evidence="2">3.2.1.52</ecNumber>
    </recommendedName>
    <alternativeName>
        <fullName>Beta-N-acetylhexosaminidase subunit alpha</fullName>
        <shortName>Hexosaminidase subunit A</shortName>
    </alternativeName>
    <alternativeName>
        <fullName>N-acetyl-beta-glucosaminidase subunit alpha</fullName>
    </alternativeName>
</protein>
<dbReference type="EC" id="3.2.1.52" evidence="2"/>
<dbReference type="EMBL" id="BT026152">
    <property type="protein sequence ID" value="ABG66991.1"/>
    <property type="molecule type" value="mRNA"/>
</dbReference>
<dbReference type="RefSeq" id="NP_001068632.1">
    <property type="nucleotide sequence ID" value="NM_001075164.2"/>
</dbReference>
<dbReference type="SMR" id="Q0V8R6"/>
<dbReference type="FunCoup" id="Q0V8R6">
    <property type="interactions" value="2124"/>
</dbReference>
<dbReference type="STRING" id="9913.ENSBTAP00000017261"/>
<dbReference type="BindingDB" id="Q0V8R6"/>
<dbReference type="ChEMBL" id="CHEMBL1075052"/>
<dbReference type="CAZy" id="GH20">
    <property type="family name" value="Glycoside Hydrolase Family 20"/>
</dbReference>
<dbReference type="GlyCosmos" id="Q0V8R6">
    <property type="glycosylation" value="3 sites, No reported glycans"/>
</dbReference>
<dbReference type="GlyGen" id="Q0V8R6">
    <property type="glycosylation" value="3 sites"/>
</dbReference>
<dbReference type="PaxDb" id="9913-ENSBTAP00000017261"/>
<dbReference type="Ensembl" id="ENSBTAT00000017261.5">
    <property type="protein sequence ID" value="ENSBTAP00000017261.3"/>
    <property type="gene ID" value="ENSBTAG00000012981.5"/>
</dbReference>
<dbReference type="GeneID" id="504468"/>
<dbReference type="KEGG" id="bta:504468"/>
<dbReference type="CTD" id="3073"/>
<dbReference type="VEuPathDB" id="HostDB:ENSBTAG00000012981"/>
<dbReference type="VGNC" id="VGNC:112630">
    <property type="gene designation" value="HEXA"/>
</dbReference>
<dbReference type="eggNOG" id="KOG2499">
    <property type="taxonomic scope" value="Eukaryota"/>
</dbReference>
<dbReference type="GeneTree" id="ENSGT00390000008107"/>
<dbReference type="HOGENOM" id="CLU_007082_0_3_1"/>
<dbReference type="InParanoid" id="Q0V8R6"/>
<dbReference type="OMA" id="KMWPRAA"/>
<dbReference type="OrthoDB" id="428480at2759"/>
<dbReference type="TreeFam" id="TF313036"/>
<dbReference type="BRENDA" id="3.2.1.52">
    <property type="organism ID" value="908"/>
</dbReference>
<dbReference type="Reactome" id="R-BTA-2022857">
    <property type="pathway name" value="Keratan sulfate degradation"/>
</dbReference>
<dbReference type="Reactome" id="R-BTA-2024101">
    <property type="pathway name" value="CS/DS degradation"/>
</dbReference>
<dbReference type="Reactome" id="R-BTA-2160916">
    <property type="pathway name" value="Hyaluronan uptake and degradation"/>
</dbReference>
<dbReference type="Reactome" id="R-BTA-9840310">
    <property type="pathway name" value="Glycosphingolipid catabolism"/>
</dbReference>
<dbReference type="PRO" id="PR:Q0V8R6"/>
<dbReference type="Proteomes" id="UP000009136">
    <property type="component" value="Chromosome 10"/>
</dbReference>
<dbReference type="Bgee" id="ENSBTAG00000012981">
    <property type="expression patterns" value="Expressed in uterine cervix and 104 other cell types or tissues"/>
</dbReference>
<dbReference type="GO" id="GO:0042582">
    <property type="term" value="C:azurophil granule"/>
    <property type="evidence" value="ECO:0007669"/>
    <property type="project" value="Ensembl"/>
</dbReference>
<dbReference type="GO" id="GO:1905379">
    <property type="term" value="C:beta-N-acetylhexosaminidase complex"/>
    <property type="evidence" value="ECO:0007669"/>
    <property type="project" value="Ensembl"/>
</dbReference>
<dbReference type="GO" id="GO:0005829">
    <property type="term" value="C:cytosol"/>
    <property type="evidence" value="ECO:0007669"/>
    <property type="project" value="Ensembl"/>
</dbReference>
<dbReference type="GO" id="GO:0005764">
    <property type="term" value="C:lysosome"/>
    <property type="evidence" value="ECO:0000318"/>
    <property type="project" value="GO_Central"/>
</dbReference>
<dbReference type="GO" id="GO:0016020">
    <property type="term" value="C:membrane"/>
    <property type="evidence" value="ECO:0000318"/>
    <property type="project" value="GO_Central"/>
</dbReference>
<dbReference type="GO" id="GO:0008375">
    <property type="term" value="F:acetylglucosaminyltransferase activity"/>
    <property type="evidence" value="ECO:0007669"/>
    <property type="project" value="Ensembl"/>
</dbReference>
<dbReference type="GO" id="GO:0004563">
    <property type="term" value="F:beta-N-acetylhexosaminidase activity"/>
    <property type="evidence" value="ECO:0000250"/>
    <property type="project" value="UniProtKB"/>
</dbReference>
<dbReference type="GO" id="GO:0046982">
    <property type="term" value="F:protein heterodimerization activity"/>
    <property type="evidence" value="ECO:0007669"/>
    <property type="project" value="Ensembl"/>
</dbReference>
<dbReference type="GO" id="GO:0007628">
    <property type="term" value="P:adult walking behavior"/>
    <property type="evidence" value="ECO:0007669"/>
    <property type="project" value="Ensembl"/>
</dbReference>
<dbReference type="GO" id="GO:0005975">
    <property type="term" value="P:carbohydrate metabolic process"/>
    <property type="evidence" value="ECO:0007669"/>
    <property type="project" value="InterPro"/>
</dbReference>
<dbReference type="GO" id="GO:0048667">
    <property type="term" value="P:cell morphogenesis involved in neuron differentiation"/>
    <property type="evidence" value="ECO:0007669"/>
    <property type="project" value="Ensembl"/>
</dbReference>
<dbReference type="GO" id="GO:0030209">
    <property type="term" value="P:dermatan sulfate proteoglycan catabolic process"/>
    <property type="evidence" value="ECO:0007669"/>
    <property type="project" value="Ensembl"/>
</dbReference>
<dbReference type="GO" id="GO:0006689">
    <property type="term" value="P:ganglioside catabolic process"/>
    <property type="evidence" value="ECO:0000250"/>
    <property type="project" value="UniProtKB"/>
</dbReference>
<dbReference type="GO" id="GO:0006024">
    <property type="term" value="P:glycosaminoglycan biosynthetic process"/>
    <property type="evidence" value="ECO:0007669"/>
    <property type="project" value="Ensembl"/>
</dbReference>
<dbReference type="GO" id="GO:0030203">
    <property type="term" value="P:glycosaminoglycan metabolic process"/>
    <property type="evidence" value="ECO:0000318"/>
    <property type="project" value="GO_Central"/>
</dbReference>
<dbReference type="GO" id="GO:0030214">
    <property type="term" value="P:hyaluronan catabolic process"/>
    <property type="evidence" value="ECO:0007669"/>
    <property type="project" value="Ensembl"/>
</dbReference>
<dbReference type="GO" id="GO:0019915">
    <property type="term" value="P:lipid storage"/>
    <property type="evidence" value="ECO:0007669"/>
    <property type="project" value="Ensembl"/>
</dbReference>
<dbReference type="GO" id="GO:0007040">
    <property type="term" value="P:lysosome organization"/>
    <property type="evidence" value="ECO:0007669"/>
    <property type="project" value="Ensembl"/>
</dbReference>
<dbReference type="GO" id="GO:0042552">
    <property type="term" value="P:myelination"/>
    <property type="evidence" value="ECO:0007669"/>
    <property type="project" value="Ensembl"/>
</dbReference>
<dbReference type="GO" id="GO:0006491">
    <property type="term" value="P:N-glycan processing"/>
    <property type="evidence" value="ECO:0000318"/>
    <property type="project" value="GO_Central"/>
</dbReference>
<dbReference type="GO" id="GO:0050885">
    <property type="term" value="P:neuromuscular process controlling balance"/>
    <property type="evidence" value="ECO:0007669"/>
    <property type="project" value="Ensembl"/>
</dbReference>
<dbReference type="GO" id="GO:0050884">
    <property type="term" value="P:neuromuscular process controlling posture"/>
    <property type="evidence" value="ECO:0007669"/>
    <property type="project" value="Ensembl"/>
</dbReference>
<dbReference type="GO" id="GO:0007605">
    <property type="term" value="P:sensory perception of sound"/>
    <property type="evidence" value="ECO:0007669"/>
    <property type="project" value="Ensembl"/>
</dbReference>
<dbReference type="GO" id="GO:0019953">
    <property type="term" value="P:sexual reproduction"/>
    <property type="evidence" value="ECO:0007669"/>
    <property type="project" value="Ensembl"/>
</dbReference>
<dbReference type="GO" id="GO:0001501">
    <property type="term" value="P:skeletal system development"/>
    <property type="evidence" value="ECO:0007669"/>
    <property type="project" value="Ensembl"/>
</dbReference>
<dbReference type="CDD" id="cd06562">
    <property type="entry name" value="GH20_HexA_HexB-like"/>
    <property type="match status" value="1"/>
</dbReference>
<dbReference type="FunFam" id="3.20.20.80:FF:000049">
    <property type="entry name" value="Beta-hexosaminidase A"/>
    <property type="match status" value="1"/>
</dbReference>
<dbReference type="Gene3D" id="3.30.379.10">
    <property type="entry name" value="Chitobiase/beta-hexosaminidase domain 2-like"/>
    <property type="match status" value="1"/>
</dbReference>
<dbReference type="Gene3D" id="3.20.20.80">
    <property type="entry name" value="Glycosidases"/>
    <property type="match status" value="1"/>
</dbReference>
<dbReference type="InterPro" id="IPR025705">
    <property type="entry name" value="Beta_hexosaminidase_sua/sub"/>
</dbReference>
<dbReference type="InterPro" id="IPR015883">
    <property type="entry name" value="Glyco_hydro_20_cat"/>
</dbReference>
<dbReference type="InterPro" id="IPR017853">
    <property type="entry name" value="Glycoside_hydrolase_SF"/>
</dbReference>
<dbReference type="InterPro" id="IPR029018">
    <property type="entry name" value="Hex-like_dom2"/>
</dbReference>
<dbReference type="InterPro" id="IPR029019">
    <property type="entry name" value="HEX_eukaryotic_N"/>
</dbReference>
<dbReference type="PANTHER" id="PTHR22600">
    <property type="entry name" value="BETA-HEXOSAMINIDASE"/>
    <property type="match status" value="1"/>
</dbReference>
<dbReference type="PANTHER" id="PTHR22600:SF39">
    <property type="entry name" value="BETA-HEXOSAMINIDASE SUBUNIT ALPHA"/>
    <property type="match status" value="1"/>
</dbReference>
<dbReference type="Pfam" id="PF00728">
    <property type="entry name" value="Glyco_hydro_20"/>
    <property type="match status" value="1"/>
</dbReference>
<dbReference type="Pfam" id="PF14845">
    <property type="entry name" value="Glycohydro_20b2"/>
    <property type="match status" value="1"/>
</dbReference>
<dbReference type="PIRSF" id="PIRSF001093">
    <property type="entry name" value="B-hxosamndse_ab_euk"/>
    <property type="match status" value="1"/>
</dbReference>
<dbReference type="PRINTS" id="PR00738">
    <property type="entry name" value="GLHYDRLASE20"/>
</dbReference>
<dbReference type="SUPFAM" id="SSF51445">
    <property type="entry name" value="(Trans)glycosidases"/>
    <property type="match status" value="1"/>
</dbReference>
<dbReference type="SUPFAM" id="SSF55545">
    <property type="entry name" value="beta-N-acetylhexosaminidase-like domain"/>
    <property type="match status" value="1"/>
</dbReference>
<gene>
    <name evidence="2" type="primary">HEXA</name>
</gene>
<accession>Q0V8R6</accession>
<feature type="signal peptide" evidence="1">
    <location>
        <begin position="1"/>
        <end position="22"/>
    </location>
</feature>
<feature type="propeptide" id="PRO_0000274203" evidence="1">
    <location>
        <begin position="23"/>
        <end position="88"/>
    </location>
</feature>
<feature type="chain" id="PRO_0000274204" description="Beta-hexosaminidase subunit alpha">
    <location>
        <begin position="89"/>
        <end position="529"/>
    </location>
</feature>
<feature type="region of interest" description="Critical for hydrolysis GM2 gangliosides" evidence="1">
    <location>
        <begin position="423"/>
        <end position="424"/>
    </location>
</feature>
<feature type="active site" description="Proton donor" evidence="1">
    <location>
        <position position="323"/>
    </location>
</feature>
<feature type="glycosylation site" description="N-linked (GlcNAc...) asparagine" evidence="3">
    <location>
        <position position="115"/>
    </location>
</feature>
<feature type="glycosylation site" description="N-linked (GlcNAc...) asparagine" evidence="3">
    <location>
        <position position="157"/>
    </location>
</feature>
<feature type="glycosylation site" description="N-linked (GlcNAc...) asparagine" evidence="3">
    <location>
        <position position="295"/>
    </location>
</feature>
<feature type="disulfide bond" evidence="1">
    <location>
        <begin position="58"/>
        <end position="104"/>
    </location>
</feature>
<feature type="disulfide bond" evidence="1">
    <location>
        <begin position="277"/>
        <end position="328"/>
    </location>
</feature>
<feature type="disulfide bond" evidence="1">
    <location>
        <begin position="505"/>
        <end position="522"/>
    </location>
</feature>
<organism>
    <name type="scientific">Bos taurus</name>
    <name type="common">Bovine</name>
    <dbReference type="NCBI Taxonomy" id="9913"/>
    <lineage>
        <taxon>Eukaryota</taxon>
        <taxon>Metazoa</taxon>
        <taxon>Chordata</taxon>
        <taxon>Craniata</taxon>
        <taxon>Vertebrata</taxon>
        <taxon>Euteleostomi</taxon>
        <taxon>Mammalia</taxon>
        <taxon>Eutheria</taxon>
        <taxon>Laurasiatheria</taxon>
        <taxon>Artiodactyla</taxon>
        <taxon>Ruminantia</taxon>
        <taxon>Pecora</taxon>
        <taxon>Bovidae</taxon>
        <taxon>Bovinae</taxon>
        <taxon>Bos</taxon>
    </lineage>
</organism>
<proteinExistence type="evidence at transcript level"/>
<sequence length="529" mass="60353">MAGSTLRFSLLLAAAFAGRATALWPWPQYIQTSELRYTIFPQSFQFQYHLSSAAQVGCSVLDEAFQRYRDLLFGSVAFRFPHPIEKRHTSEKNSLVVLVVTPGCDQFPSLGSVENYTLTINDEQSLLLSETVWGALRGLETFSQLIWRSPEGTFYVNKTDIEDFPRFPHRGLLLDTSRHYLPLASILDTLDVMAYNKFNVFHWHLVDDSSFPYESFTFPELTKKGSYNPATHIYTAQDVKEVIEYARLRGIRVLAEFDTPGHTLSWGPGVPGLLTPCYSGSHPSGTFGPVNPALNNTYEFMSTFFLEISTVFPDFYLHLGGDEVDFTCWKSNPDIQAFMKKKGFGDDFKKLESFYIQTLLDIVSAYGKGYVVWQEVFDNKVKVRPDTIIQVWREEIPVKYVKELALVTRAGFRALLSAPWYLNHITYGPDWKEIYLVEPLAFEGSPEQKALVIGGEACMWGEYVDSTNLVPRLWPRAGAVAERLWSNKMVSNLDFAFKRLAHFRCELLRRGVQAQPLSVGYCDMEFEQT</sequence>
<comment type="function">
    <text evidence="2">Hydrolyzes the non-reducing end N-acetyl-D-hexosamine and/or sulfated N-acetyl-D-hexosamine of glycoconjugates, such as the oligosaccharide moieties from proteins and neutral glycolipids, or from certain mucopolysaccharides. The isozyme S is as active as the isozyme A on the anionic bis-sulfated glycans, the chondroitin-6-sulfate trisaccharide (C6S-3), and the dermatan sulfate pentasaccharide, and the sulfated glycosphingolipid SM2. The isozyme B does not hydrolyze each of these substrates, however hydrolyzes efficiently neutral oligosaccharide. Only the isozyme A is responsible for the degradation of GM2 gangliosides in the presence of GM2A.</text>
</comment>
<comment type="catalytic activity">
    <reaction evidence="2">
        <text>Hydrolysis of terminal non-reducing N-acetyl-D-hexosamine residues in N-acetyl-beta-D-hexosaminides.</text>
        <dbReference type="EC" id="3.2.1.52"/>
    </reaction>
</comment>
<comment type="catalytic activity">
    <reaction evidence="2">
        <text>N-acetyl-beta-D-galactosaminyl-(1-&gt;4)-beta-D-3-sulfogalactosyl-(1-&gt;4)-beta-D-glucosyl-(1&lt;-&gt;1')-ceramide + H2O = a beta-D-3-sulfogalactosyl-(1-&gt;4)-beta-D-glucosyl-(1&lt;-&gt;1')-ceramide + N-acetyl-beta-D-galactosamine</text>
        <dbReference type="Rhea" id="RHEA:48276"/>
        <dbReference type="ChEBI" id="CHEBI:15377"/>
        <dbReference type="ChEBI" id="CHEBI:28497"/>
        <dbReference type="ChEBI" id="CHEBI:90163"/>
        <dbReference type="ChEBI" id="CHEBI:90164"/>
    </reaction>
    <physiologicalReaction direction="left-to-right" evidence="2">
        <dbReference type="Rhea" id="RHEA:48277"/>
    </physiologicalReaction>
</comment>
<comment type="catalytic activity">
    <reaction evidence="2">
        <text>a ganglioside GM2 (d18:1(4E)) + H2O = a ganglioside GM3 (d18:1(4E)) + N-acetyl-beta-D-galactosamine</text>
        <dbReference type="Rhea" id="RHEA:47940"/>
        <dbReference type="ChEBI" id="CHEBI:15377"/>
        <dbReference type="ChEBI" id="CHEBI:28497"/>
        <dbReference type="ChEBI" id="CHEBI:60065"/>
        <dbReference type="ChEBI" id="CHEBI:71502"/>
    </reaction>
    <physiologicalReaction direction="left-to-right" evidence="2">
        <dbReference type="Rhea" id="RHEA:47941"/>
    </physiologicalReaction>
</comment>
<comment type="catalytic activity">
    <reaction evidence="2">
        <text>a ganglioside GM2 + H2O = a ganglioside GM3 + N-acetyl-beta-D-galactosamine</text>
        <dbReference type="Rhea" id="RHEA:47968"/>
        <dbReference type="ChEBI" id="CHEBI:15377"/>
        <dbReference type="ChEBI" id="CHEBI:28497"/>
        <dbReference type="ChEBI" id="CHEBI:79210"/>
        <dbReference type="ChEBI" id="CHEBI:79218"/>
    </reaction>
    <physiologicalReaction direction="left-to-right" evidence="2">
        <dbReference type="Rhea" id="RHEA:47969"/>
    </physiologicalReaction>
</comment>
<comment type="catalytic activity">
    <reaction evidence="2">
        <text>beta-D-GalNAc-(1-&gt;4)-alpha-L-IdoA-(1-&gt;3)-beta-D-GalNAc-4-sulfate-(1-&gt;4)-alpha-L-IdoA-(1-&gt;3)-D-GalNAc-4-sulfate + H2O = alpha-L-IdoA-(1-&gt;3)-beta-D-GalNAc-4-sulfate-(1-&gt;4)-alpha-L-IdoA-(1-&gt;3)-D-GalNAc-4-sulfate + N-acetyl-D-galactosamine</text>
        <dbReference type="Rhea" id="RHEA:64372"/>
        <dbReference type="ChEBI" id="CHEBI:15377"/>
        <dbReference type="ChEBI" id="CHEBI:28037"/>
        <dbReference type="ChEBI" id="CHEBI:152565"/>
        <dbReference type="ChEBI" id="CHEBI:152566"/>
    </reaction>
    <physiologicalReaction direction="left-to-right" evidence="2">
        <dbReference type="Rhea" id="RHEA:64373"/>
    </physiologicalReaction>
</comment>
<comment type="catalytic activity">
    <reaction evidence="2">
        <text>N-acetyl-beta-D-6-sulfogalactosaminyl-(1-&gt;4)-alpha-L-iduronyl-(1-&gt;3)-N-acetyl-D-6-sulfogalactosamine + H2O = alpha-L-iduronyl-(1-&gt;3)-N-acetyl-D-6-sulfogalactosamine + N-acetyl-D-6-sulfogalactosamine</text>
        <dbReference type="Rhea" id="RHEA:64384"/>
        <dbReference type="ChEBI" id="CHEBI:15377"/>
        <dbReference type="ChEBI" id="CHEBI:152567"/>
        <dbReference type="ChEBI" id="CHEBI:152568"/>
        <dbReference type="ChEBI" id="CHEBI:153064"/>
    </reaction>
    <physiologicalReaction direction="left-to-right" evidence="2">
        <dbReference type="Rhea" id="RHEA:64385"/>
    </physiologicalReaction>
</comment>
<comment type="activity regulation">
    <text evidence="2">Addition of GM2A stimulates the hydrolysis of sulfated glycosphingolipid SM2 and the ganglioside GM2.</text>
</comment>
<comment type="subunit">
    <text evidence="2">There are 3 beta-hexosaminidase isozymes: isozyme A (hexosaminidase A) is a heterodimer composed of one subunit alpha and one subunit beta (chain A and B); isozyme B (hexosaminidase B) is a homodimer of two beta subunits (two chains A and B); isozyme S (hexosaminidase S) is a homodimer of two alpha subunits. The composition of the dimer (isozyme A versus isozyme S) has a significant effect on the substrate specificity of the alpha subunit active site.</text>
</comment>
<comment type="subcellular location">
    <subcellularLocation>
        <location evidence="1">Lysosome</location>
    </subcellularLocation>
</comment>
<comment type="similarity">
    <text evidence="4">Belongs to the glycosyl hydrolase 20 family.</text>
</comment>
<reference key="1">
    <citation type="journal article" date="2005" name="BMC Genomics">
        <title>Characterization of 954 bovine full-CDS cDNA sequences.</title>
        <authorList>
            <person name="Harhay G.P."/>
            <person name="Sonstegard T.S."/>
            <person name="Keele J.W."/>
            <person name="Heaton M.P."/>
            <person name="Clawson M.L."/>
            <person name="Snelling W.M."/>
            <person name="Wiedmann R.T."/>
            <person name="Van Tassell C.P."/>
            <person name="Smith T.P.L."/>
        </authorList>
    </citation>
    <scope>NUCLEOTIDE SEQUENCE [LARGE SCALE MRNA]</scope>
</reference>
<evidence type="ECO:0000250" key="1"/>
<evidence type="ECO:0000250" key="2">
    <source>
        <dbReference type="UniProtKB" id="P06865"/>
    </source>
</evidence>
<evidence type="ECO:0000255" key="3"/>
<evidence type="ECO:0000305" key="4"/>
<name>HEXA_BOVIN</name>